<proteinExistence type="inferred from homology"/>
<accession>Q32JD7</accession>
<comment type="function">
    <text evidence="2">Catalyzes the specific phosphorylation of the 3-hydroxyl group of shikimic acid using ATP as a cosubstrate.</text>
</comment>
<comment type="catalytic activity">
    <reaction evidence="2">
        <text>shikimate + ATP = 3-phosphoshikimate + ADP + H(+)</text>
        <dbReference type="Rhea" id="RHEA:13121"/>
        <dbReference type="ChEBI" id="CHEBI:15378"/>
        <dbReference type="ChEBI" id="CHEBI:30616"/>
        <dbReference type="ChEBI" id="CHEBI:36208"/>
        <dbReference type="ChEBI" id="CHEBI:145989"/>
        <dbReference type="ChEBI" id="CHEBI:456216"/>
        <dbReference type="EC" id="2.7.1.71"/>
    </reaction>
</comment>
<comment type="cofactor">
    <cofactor evidence="2">
        <name>Mg(2+)</name>
        <dbReference type="ChEBI" id="CHEBI:18420"/>
    </cofactor>
    <text evidence="2">Binds 1 Mg(2+) ion per subunit.</text>
</comment>
<comment type="pathway">
    <text evidence="2">Metabolic intermediate biosynthesis; chorismate biosynthesis; chorismate from D-erythrose 4-phosphate and phosphoenolpyruvate: step 5/7.</text>
</comment>
<comment type="subunit">
    <text evidence="2">Monomer.</text>
</comment>
<comment type="subcellular location">
    <subcellularLocation>
        <location evidence="2">Cytoplasm</location>
    </subcellularLocation>
</comment>
<comment type="domain">
    <text evidence="2">The LID domain closes over the active site upon ATP binding.</text>
</comment>
<comment type="similarity">
    <text evidence="2">Belongs to the shikimate kinase family. AroL subfamily.</text>
</comment>
<keyword id="KW-0028">Amino-acid biosynthesis</keyword>
<keyword id="KW-0057">Aromatic amino acid biosynthesis</keyword>
<keyword id="KW-0067">ATP-binding</keyword>
<keyword id="KW-0963">Cytoplasm</keyword>
<keyword id="KW-0418">Kinase</keyword>
<keyword id="KW-0460">Magnesium</keyword>
<keyword id="KW-0479">Metal-binding</keyword>
<keyword id="KW-0547">Nucleotide-binding</keyword>
<keyword id="KW-1185">Reference proteome</keyword>
<keyword id="KW-0808">Transferase</keyword>
<organism>
    <name type="scientific">Shigella dysenteriae serotype 1 (strain Sd197)</name>
    <dbReference type="NCBI Taxonomy" id="300267"/>
    <lineage>
        <taxon>Bacteria</taxon>
        <taxon>Pseudomonadati</taxon>
        <taxon>Pseudomonadota</taxon>
        <taxon>Gammaproteobacteria</taxon>
        <taxon>Enterobacterales</taxon>
        <taxon>Enterobacteriaceae</taxon>
        <taxon>Shigella</taxon>
    </lineage>
</organism>
<feature type="initiator methionine" description="Removed" evidence="1">
    <location>
        <position position="1"/>
    </location>
</feature>
<feature type="chain" id="PRO_0000237932" description="Shikimate kinase 2">
    <location>
        <begin position="2"/>
        <end position="174"/>
    </location>
</feature>
<feature type="region of interest" description="LID domain">
    <location>
        <begin position="112"/>
        <end position="126"/>
    </location>
</feature>
<feature type="binding site" evidence="2">
    <location>
        <begin position="12"/>
        <end position="17"/>
    </location>
    <ligand>
        <name>ATP</name>
        <dbReference type="ChEBI" id="CHEBI:30616"/>
    </ligand>
</feature>
<feature type="binding site" evidence="2">
    <location>
        <position position="16"/>
    </location>
    <ligand>
        <name>Mg(2+)</name>
        <dbReference type="ChEBI" id="CHEBI:18420"/>
    </ligand>
</feature>
<feature type="binding site" evidence="2">
    <location>
        <position position="32"/>
    </location>
    <ligand>
        <name>Mg(2+)</name>
        <dbReference type="ChEBI" id="CHEBI:18420"/>
    </ligand>
</feature>
<feature type="binding site" evidence="2">
    <location>
        <position position="34"/>
    </location>
    <ligand>
        <name>substrate</name>
    </ligand>
</feature>
<feature type="binding site" evidence="2">
    <location>
        <position position="58"/>
    </location>
    <ligand>
        <name>substrate</name>
    </ligand>
</feature>
<feature type="binding site" evidence="2">
    <location>
        <position position="79"/>
    </location>
    <ligand>
        <name>substrate</name>
    </ligand>
</feature>
<feature type="binding site" evidence="2">
    <location>
        <position position="120"/>
    </location>
    <ligand>
        <name>ATP</name>
        <dbReference type="ChEBI" id="CHEBI:30616"/>
    </ligand>
</feature>
<feature type="binding site" evidence="2">
    <location>
        <position position="139"/>
    </location>
    <ligand>
        <name>substrate</name>
    </ligand>
</feature>
<dbReference type="EC" id="2.7.1.71" evidence="2"/>
<dbReference type="EMBL" id="CP000034">
    <property type="protein sequence ID" value="ABB60570.1"/>
    <property type="molecule type" value="Genomic_DNA"/>
</dbReference>
<dbReference type="RefSeq" id="WP_000193380.1">
    <property type="nucleotide sequence ID" value="NC_007606.1"/>
</dbReference>
<dbReference type="RefSeq" id="YP_402059.1">
    <property type="nucleotide sequence ID" value="NC_007606.1"/>
</dbReference>
<dbReference type="SMR" id="Q32JD7"/>
<dbReference type="STRING" id="300267.SDY_0355"/>
<dbReference type="EnsemblBacteria" id="ABB60570">
    <property type="protein sequence ID" value="ABB60570"/>
    <property type="gene ID" value="SDY_0355"/>
</dbReference>
<dbReference type="KEGG" id="sdy:SDY_0355"/>
<dbReference type="PATRIC" id="fig|300267.13.peg.416"/>
<dbReference type="HOGENOM" id="CLU_057607_4_3_6"/>
<dbReference type="UniPathway" id="UPA00053">
    <property type="reaction ID" value="UER00088"/>
</dbReference>
<dbReference type="Proteomes" id="UP000002716">
    <property type="component" value="Chromosome"/>
</dbReference>
<dbReference type="GO" id="GO:0005829">
    <property type="term" value="C:cytosol"/>
    <property type="evidence" value="ECO:0007669"/>
    <property type="project" value="TreeGrafter"/>
</dbReference>
<dbReference type="GO" id="GO:0005524">
    <property type="term" value="F:ATP binding"/>
    <property type="evidence" value="ECO:0007669"/>
    <property type="project" value="UniProtKB-UniRule"/>
</dbReference>
<dbReference type="GO" id="GO:0000287">
    <property type="term" value="F:magnesium ion binding"/>
    <property type="evidence" value="ECO:0007669"/>
    <property type="project" value="UniProtKB-UniRule"/>
</dbReference>
<dbReference type="GO" id="GO:0004765">
    <property type="term" value="F:shikimate kinase activity"/>
    <property type="evidence" value="ECO:0007669"/>
    <property type="project" value="UniProtKB-UniRule"/>
</dbReference>
<dbReference type="GO" id="GO:0008652">
    <property type="term" value="P:amino acid biosynthetic process"/>
    <property type="evidence" value="ECO:0007669"/>
    <property type="project" value="UniProtKB-KW"/>
</dbReference>
<dbReference type="GO" id="GO:0009073">
    <property type="term" value="P:aromatic amino acid family biosynthetic process"/>
    <property type="evidence" value="ECO:0007669"/>
    <property type="project" value="UniProtKB-KW"/>
</dbReference>
<dbReference type="GO" id="GO:0009423">
    <property type="term" value="P:chorismate biosynthetic process"/>
    <property type="evidence" value="ECO:0007669"/>
    <property type="project" value="UniProtKB-UniRule"/>
</dbReference>
<dbReference type="CDD" id="cd00464">
    <property type="entry name" value="SK"/>
    <property type="match status" value="1"/>
</dbReference>
<dbReference type="FunFam" id="3.40.50.300:FF:000408">
    <property type="entry name" value="Shikimate kinase 2"/>
    <property type="match status" value="1"/>
</dbReference>
<dbReference type="Gene3D" id="3.40.50.300">
    <property type="entry name" value="P-loop containing nucleotide triphosphate hydrolases"/>
    <property type="match status" value="1"/>
</dbReference>
<dbReference type="HAMAP" id="MF_00109">
    <property type="entry name" value="Shikimate_kinase"/>
    <property type="match status" value="1"/>
</dbReference>
<dbReference type="HAMAP" id="MF_01269">
    <property type="entry name" value="Shikimate_kinase_2"/>
    <property type="match status" value="1"/>
</dbReference>
<dbReference type="InterPro" id="IPR027417">
    <property type="entry name" value="P-loop_NTPase"/>
</dbReference>
<dbReference type="InterPro" id="IPR031322">
    <property type="entry name" value="Shikimate/glucono_kinase"/>
</dbReference>
<dbReference type="InterPro" id="IPR000623">
    <property type="entry name" value="Shikimate_kinase/TSH1"/>
</dbReference>
<dbReference type="InterPro" id="IPR027544">
    <property type="entry name" value="Shikimate_kinase_2"/>
</dbReference>
<dbReference type="InterPro" id="IPR023000">
    <property type="entry name" value="Shikimate_kinase_CS"/>
</dbReference>
<dbReference type="NCBIfam" id="NF002988">
    <property type="entry name" value="PRK03731.1"/>
    <property type="match status" value="1"/>
</dbReference>
<dbReference type="PANTHER" id="PTHR21087">
    <property type="entry name" value="SHIKIMATE KINASE"/>
    <property type="match status" value="1"/>
</dbReference>
<dbReference type="PANTHER" id="PTHR21087:SF21">
    <property type="entry name" value="SHIKIMATE KINASE 2"/>
    <property type="match status" value="1"/>
</dbReference>
<dbReference type="Pfam" id="PF01202">
    <property type="entry name" value="SKI"/>
    <property type="match status" value="1"/>
</dbReference>
<dbReference type="PRINTS" id="PR01100">
    <property type="entry name" value="SHIKIMTKNASE"/>
</dbReference>
<dbReference type="SUPFAM" id="SSF52540">
    <property type="entry name" value="P-loop containing nucleoside triphosphate hydrolases"/>
    <property type="match status" value="1"/>
</dbReference>
<dbReference type="PROSITE" id="PS01128">
    <property type="entry name" value="SHIKIMATE_KINASE"/>
    <property type="match status" value="1"/>
</dbReference>
<reference key="1">
    <citation type="journal article" date="2005" name="Nucleic Acids Res.">
        <title>Genome dynamics and diversity of Shigella species, the etiologic agents of bacillary dysentery.</title>
        <authorList>
            <person name="Yang F."/>
            <person name="Yang J."/>
            <person name="Zhang X."/>
            <person name="Chen L."/>
            <person name="Jiang Y."/>
            <person name="Yan Y."/>
            <person name="Tang X."/>
            <person name="Wang J."/>
            <person name="Xiong Z."/>
            <person name="Dong J."/>
            <person name="Xue Y."/>
            <person name="Zhu Y."/>
            <person name="Xu X."/>
            <person name="Sun L."/>
            <person name="Chen S."/>
            <person name="Nie H."/>
            <person name="Peng J."/>
            <person name="Xu J."/>
            <person name="Wang Y."/>
            <person name="Yuan Z."/>
            <person name="Wen Y."/>
            <person name="Yao Z."/>
            <person name="Shen Y."/>
            <person name="Qiang B."/>
            <person name="Hou Y."/>
            <person name="Yu J."/>
            <person name="Jin Q."/>
        </authorList>
    </citation>
    <scope>NUCLEOTIDE SEQUENCE [LARGE SCALE GENOMIC DNA]</scope>
    <source>
        <strain>Sd197</strain>
    </source>
</reference>
<sequence>MTQPLFLIGPRGCGKTTVGMALADLLNRRFVDTDQWLQSQLNMTVAEIVEREEWAGFRARETAALEAVTAPSTVIATGGGIILTEFNRHFMQNNGIVVYLCAPVSVLVNRLQAAPEEDLRPTLTGKPLSEEVQEVLEERDALYREVAHIIIDATNEPSQVISEIRSALAQTINC</sequence>
<gene>
    <name evidence="2" type="primary">aroL</name>
    <name type="ordered locus">SDY_0355</name>
</gene>
<name>AROL_SHIDS</name>
<evidence type="ECO:0000250" key="1"/>
<evidence type="ECO:0000255" key="2">
    <source>
        <dbReference type="HAMAP-Rule" id="MF_01269"/>
    </source>
</evidence>
<protein>
    <recommendedName>
        <fullName evidence="2">Shikimate kinase 2</fullName>
        <shortName evidence="2">SK 2</shortName>
        <ecNumber evidence="2">2.7.1.71</ecNumber>
    </recommendedName>
</protein>